<reference key="1">
    <citation type="journal article" date="2004" name="Nat. Biotechnol.">
        <title>Complete sequence and comparative genome analysis of the dairy bacterium Streptococcus thermophilus.</title>
        <authorList>
            <person name="Bolotin A."/>
            <person name="Quinquis B."/>
            <person name="Renault P."/>
            <person name="Sorokin A."/>
            <person name="Ehrlich S.D."/>
            <person name="Kulakauskas S."/>
            <person name="Lapidus A."/>
            <person name="Goltsman E."/>
            <person name="Mazur M."/>
            <person name="Pusch G.D."/>
            <person name="Fonstein M."/>
            <person name="Overbeek R."/>
            <person name="Kyprides N."/>
            <person name="Purnelle B."/>
            <person name="Prozzi D."/>
            <person name="Ngui K."/>
            <person name="Masuy D."/>
            <person name="Hancy F."/>
            <person name="Burteau S."/>
            <person name="Boutry M."/>
            <person name="Delcour J."/>
            <person name="Goffeau A."/>
            <person name="Hols P."/>
        </authorList>
    </citation>
    <scope>NUCLEOTIDE SEQUENCE [LARGE SCALE GENOMIC DNA]</scope>
    <source>
        <strain>ATCC BAA-250 / LMG 18311</strain>
    </source>
</reference>
<comment type="function">
    <text evidence="1">Essential for recycling GMP and indirectly, cGMP.</text>
</comment>
<comment type="catalytic activity">
    <reaction evidence="1">
        <text>GMP + ATP = GDP + ADP</text>
        <dbReference type="Rhea" id="RHEA:20780"/>
        <dbReference type="ChEBI" id="CHEBI:30616"/>
        <dbReference type="ChEBI" id="CHEBI:58115"/>
        <dbReference type="ChEBI" id="CHEBI:58189"/>
        <dbReference type="ChEBI" id="CHEBI:456216"/>
        <dbReference type="EC" id="2.7.4.8"/>
    </reaction>
</comment>
<comment type="subcellular location">
    <subcellularLocation>
        <location evidence="1">Cytoplasm</location>
    </subcellularLocation>
</comment>
<comment type="similarity">
    <text evidence="1">Belongs to the guanylate kinase family.</text>
</comment>
<dbReference type="EC" id="2.7.4.8" evidence="1"/>
<dbReference type="EMBL" id="CP000023">
    <property type="protein sequence ID" value="AAV61044.1"/>
    <property type="molecule type" value="Genomic_DNA"/>
</dbReference>
<dbReference type="RefSeq" id="WP_011226296.1">
    <property type="nucleotide sequence ID" value="NC_006448.1"/>
</dbReference>
<dbReference type="SMR" id="Q5M3I4"/>
<dbReference type="STRING" id="264199.stu1431"/>
<dbReference type="GeneID" id="66899192"/>
<dbReference type="KEGG" id="stl:stu1431"/>
<dbReference type="PATRIC" id="fig|264199.4.peg.1405"/>
<dbReference type="eggNOG" id="COG0194">
    <property type="taxonomic scope" value="Bacteria"/>
</dbReference>
<dbReference type="HOGENOM" id="CLU_001715_1_0_9"/>
<dbReference type="Proteomes" id="UP000001170">
    <property type="component" value="Chromosome"/>
</dbReference>
<dbReference type="GO" id="GO:0005829">
    <property type="term" value="C:cytosol"/>
    <property type="evidence" value="ECO:0007669"/>
    <property type="project" value="TreeGrafter"/>
</dbReference>
<dbReference type="GO" id="GO:0005524">
    <property type="term" value="F:ATP binding"/>
    <property type="evidence" value="ECO:0007669"/>
    <property type="project" value="UniProtKB-UniRule"/>
</dbReference>
<dbReference type="GO" id="GO:0004385">
    <property type="term" value="F:guanylate kinase activity"/>
    <property type="evidence" value="ECO:0007669"/>
    <property type="project" value="UniProtKB-UniRule"/>
</dbReference>
<dbReference type="CDD" id="cd00071">
    <property type="entry name" value="GMPK"/>
    <property type="match status" value="1"/>
</dbReference>
<dbReference type="FunFam" id="3.40.50.300:FF:000855">
    <property type="entry name" value="Guanylate kinase"/>
    <property type="match status" value="1"/>
</dbReference>
<dbReference type="FunFam" id="3.30.63.10:FF:000002">
    <property type="entry name" value="Guanylate kinase 1"/>
    <property type="match status" value="1"/>
</dbReference>
<dbReference type="Gene3D" id="3.30.63.10">
    <property type="entry name" value="Guanylate Kinase phosphate binding domain"/>
    <property type="match status" value="1"/>
</dbReference>
<dbReference type="Gene3D" id="3.40.50.300">
    <property type="entry name" value="P-loop containing nucleotide triphosphate hydrolases"/>
    <property type="match status" value="1"/>
</dbReference>
<dbReference type="HAMAP" id="MF_00328">
    <property type="entry name" value="Guanylate_kinase"/>
    <property type="match status" value="1"/>
</dbReference>
<dbReference type="InterPro" id="IPR008145">
    <property type="entry name" value="GK/Ca_channel_bsu"/>
</dbReference>
<dbReference type="InterPro" id="IPR008144">
    <property type="entry name" value="Guanylate_kin-like_dom"/>
</dbReference>
<dbReference type="InterPro" id="IPR017665">
    <property type="entry name" value="Guanylate_kinase"/>
</dbReference>
<dbReference type="InterPro" id="IPR020590">
    <property type="entry name" value="Guanylate_kinase_CS"/>
</dbReference>
<dbReference type="InterPro" id="IPR027417">
    <property type="entry name" value="P-loop_NTPase"/>
</dbReference>
<dbReference type="NCBIfam" id="TIGR03263">
    <property type="entry name" value="guanyl_kin"/>
    <property type="match status" value="1"/>
</dbReference>
<dbReference type="PANTHER" id="PTHR23117:SF13">
    <property type="entry name" value="GUANYLATE KINASE"/>
    <property type="match status" value="1"/>
</dbReference>
<dbReference type="PANTHER" id="PTHR23117">
    <property type="entry name" value="GUANYLATE KINASE-RELATED"/>
    <property type="match status" value="1"/>
</dbReference>
<dbReference type="Pfam" id="PF00625">
    <property type="entry name" value="Guanylate_kin"/>
    <property type="match status" value="1"/>
</dbReference>
<dbReference type="SMART" id="SM00072">
    <property type="entry name" value="GuKc"/>
    <property type="match status" value="1"/>
</dbReference>
<dbReference type="SUPFAM" id="SSF52540">
    <property type="entry name" value="P-loop containing nucleoside triphosphate hydrolases"/>
    <property type="match status" value="1"/>
</dbReference>
<dbReference type="PROSITE" id="PS00856">
    <property type="entry name" value="GUANYLATE_KINASE_1"/>
    <property type="match status" value="1"/>
</dbReference>
<dbReference type="PROSITE" id="PS50052">
    <property type="entry name" value="GUANYLATE_KINASE_2"/>
    <property type="match status" value="1"/>
</dbReference>
<proteinExistence type="inferred from homology"/>
<gene>
    <name evidence="1" type="primary">gmk</name>
    <name type="ordered locus">stu1431</name>
</gene>
<sequence length="209" mass="24053">MSERGLLIVFSGPSGVGKGTVRQEIFSKSDHKFEYSVSMTTRAQRPGEVDGKDYFFRSREEFEELIRNGQMLEYAEYVGNYYGTPLAYVNETLDKGIDVFLEIEVQGALQVKKKVPDAVFIFLTPPDLNELEERLVGRGTDSEEVIAQRIERAREEIALMSEYDYTIVNDEVPLAAERVKRVIEAEHFRVERVIGHYRNMISDKRLSDK</sequence>
<protein>
    <recommendedName>
        <fullName evidence="1">Guanylate kinase</fullName>
        <ecNumber evidence="1">2.7.4.8</ecNumber>
    </recommendedName>
    <alternativeName>
        <fullName evidence="1">GMP kinase</fullName>
    </alternativeName>
</protein>
<keyword id="KW-0067">ATP-binding</keyword>
<keyword id="KW-0963">Cytoplasm</keyword>
<keyword id="KW-0418">Kinase</keyword>
<keyword id="KW-0547">Nucleotide-binding</keyword>
<keyword id="KW-1185">Reference proteome</keyword>
<keyword id="KW-0808">Transferase</keyword>
<name>KGUA_STRT2</name>
<accession>Q5M3I4</accession>
<feature type="chain" id="PRO_0000266418" description="Guanylate kinase">
    <location>
        <begin position="1"/>
        <end position="209"/>
    </location>
</feature>
<feature type="domain" description="Guanylate kinase-like" evidence="1">
    <location>
        <begin position="5"/>
        <end position="184"/>
    </location>
</feature>
<feature type="binding site" evidence="1">
    <location>
        <begin position="12"/>
        <end position="19"/>
    </location>
    <ligand>
        <name>ATP</name>
        <dbReference type="ChEBI" id="CHEBI:30616"/>
    </ligand>
</feature>
<evidence type="ECO:0000255" key="1">
    <source>
        <dbReference type="HAMAP-Rule" id="MF_00328"/>
    </source>
</evidence>
<organism>
    <name type="scientific">Streptococcus thermophilus (strain ATCC BAA-250 / LMG 18311)</name>
    <dbReference type="NCBI Taxonomy" id="264199"/>
    <lineage>
        <taxon>Bacteria</taxon>
        <taxon>Bacillati</taxon>
        <taxon>Bacillota</taxon>
        <taxon>Bacilli</taxon>
        <taxon>Lactobacillales</taxon>
        <taxon>Streptococcaceae</taxon>
        <taxon>Streptococcus</taxon>
    </lineage>
</organism>